<comment type="function">
    <text evidence="1">Attaches a formyl group to the free amino group of methionyl-tRNA(fMet). The formyl group appears to play a dual role in the initiator identity of N-formylmethionyl-tRNA by promoting its recognition by IF2 and preventing the misappropriation of this tRNA by the elongation apparatus.</text>
</comment>
<comment type="catalytic activity">
    <reaction evidence="1">
        <text>L-methionyl-tRNA(fMet) + (6R)-10-formyltetrahydrofolate = N-formyl-L-methionyl-tRNA(fMet) + (6S)-5,6,7,8-tetrahydrofolate + H(+)</text>
        <dbReference type="Rhea" id="RHEA:24380"/>
        <dbReference type="Rhea" id="RHEA-COMP:9952"/>
        <dbReference type="Rhea" id="RHEA-COMP:9953"/>
        <dbReference type="ChEBI" id="CHEBI:15378"/>
        <dbReference type="ChEBI" id="CHEBI:57453"/>
        <dbReference type="ChEBI" id="CHEBI:78530"/>
        <dbReference type="ChEBI" id="CHEBI:78844"/>
        <dbReference type="ChEBI" id="CHEBI:195366"/>
        <dbReference type="EC" id="2.1.2.9"/>
    </reaction>
</comment>
<comment type="similarity">
    <text evidence="1">Belongs to the Fmt family.</text>
</comment>
<sequence length="311" mass="33648">MIKLLFMGTPQFSATVLKGLLDNPAYEILGVVTQPDRAVGRKKDIKVTPVKQLALEHGISIYQPEKLSGSQELIEIMGLGADGIITAAFGQFLPTLLLDSVSFAINVHASLLPKYRGGAPIHYAIMNGDKEAGVTIMEMIKEMDAGDMVAKASTPILETDNVGTLFEKLAIIGRDLLLDSLPAYLSGELKPIPQDHSQATFSPNISPEQEKLDWTMSNQEVFSHIRGMNPWPVAHTFLEGQRLKIYEAQLAEGEGLPGQVIVKTKKSLVIATGQGALSLIVVQPAGKPKMSIIDFLNGIGRKLEVGDIIGR</sequence>
<protein>
    <recommendedName>
        <fullName evidence="1">Methionyl-tRNA formyltransferase</fullName>
        <ecNumber evidence="1">2.1.2.9</ecNumber>
    </recommendedName>
</protein>
<organism>
    <name type="scientific">Streptococcus pyogenes serotype M18 (strain MGAS8232)</name>
    <dbReference type="NCBI Taxonomy" id="186103"/>
    <lineage>
        <taxon>Bacteria</taxon>
        <taxon>Bacillati</taxon>
        <taxon>Bacillota</taxon>
        <taxon>Bacilli</taxon>
        <taxon>Lactobacillales</taxon>
        <taxon>Streptococcaceae</taxon>
        <taxon>Streptococcus</taxon>
    </lineage>
</organism>
<reference key="1">
    <citation type="journal article" date="2002" name="Proc. Natl. Acad. Sci. U.S.A.">
        <title>Genome sequence and comparative microarray analysis of serotype M18 group A Streptococcus strains associated with acute rheumatic fever outbreaks.</title>
        <authorList>
            <person name="Smoot J.C."/>
            <person name="Barbian K.D."/>
            <person name="Van Gompel J.J."/>
            <person name="Smoot L.M."/>
            <person name="Chaussee M.S."/>
            <person name="Sylva G.L."/>
            <person name="Sturdevant D.E."/>
            <person name="Ricklefs S.M."/>
            <person name="Porcella S.F."/>
            <person name="Parkins L.D."/>
            <person name="Beres S.B."/>
            <person name="Campbell D.S."/>
            <person name="Smith T.M."/>
            <person name="Zhang Q."/>
            <person name="Kapur V."/>
            <person name="Daly J.A."/>
            <person name="Veasy L.G."/>
            <person name="Musser J.M."/>
        </authorList>
    </citation>
    <scope>NUCLEOTIDE SEQUENCE [LARGE SCALE GENOMIC DNA]</scope>
    <source>
        <strain>MGAS8232</strain>
    </source>
</reference>
<feature type="chain" id="PRO_0000083063" description="Methionyl-tRNA formyltransferase">
    <location>
        <begin position="1"/>
        <end position="311"/>
    </location>
</feature>
<feature type="binding site" evidence="1">
    <location>
        <begin position="110"/>
        <end position="113"/>
    </location>
    <ligand>
        <name>(6S)-5,6,7,8-tetrahydrofolate</name>
        <dbReference type="ChEBI" id="CHEBI:57453"/>
    </ligand>
</feature>
<proteinExistence type="inferred from homology"/>
<name>FMT_STRP8</name>
<accession>Q8P003</accession>
<dbReference type="EC" id="2.1.2.9" evidence="1"/>
<dbReference type="EMBL" id="AE009949">
    <property type="protein sequence ID" value="AAL98188.1"/>
    <property type="molecule type" value="Genomic_DNA"/>
</dbReference>
<dbReference type="RefSeq" id="WP_011018056.1">
    <property type="nucleotide sequence ID" value="NC_003485.1"/>
</dbReference>
<dbReference type="SMR" id="Q8P003"/>
<dbReference type="KEGG" id="spm:spyM18_1638"/>
<dbReference type="HOGENOM" id="CLU_033347_1_1_9"/>
<dbReference type="GO" id="GO:0005829">
    <property type="term" value="C:cytosol"/>
    <property type="evidence" value="ECO:0007669"/>
    <property type="project" value="TreeGrafter"/>
</dbReference>
<dbReference type="GO" id="GO:0004479">
    <property type="term" value="F:methionyl-tRNA formyltransferase activity"/>
    <property type="evidence" value="ECO:0007669"/>
    <property type="project" value="UniProtKB-UniRule"/>
</dbReference>
<dbReference type="CDD" id="cd08646">
    <property type="entry name" value="FMT_core_Met-tRNA-FMT_N"/>
    <property type="match status" value="1"/>
</dbReference>
<dbReference type="CDD" id="cd08704">
    <property type="entry name" value="Met_tRNA_FMT_C"/>
    <property type="match status" value="1"/>
</dbReference>
<dbReference type="FunFam" id="3.40.50.170:FF:000004">
    <property type="entry name" value="Methionyl-tRNA formyltransferase"/>
    <property type="match status" value="1"/>
</dbReference>
<dbReference type="Gene3D" id="3.10.25.10">
    <property type="entry name" value="Formyl transferase, C-terminal domain"/>
    <property type="match status" value="1"/>
</dbReference>
<dbReference type="Gene3D" id="3.40.50.170">
    <property type="entry name" value="Formyl transferase, N-terminal domain"/>
    <property type="match status" value="1"/>
</dbReference>
<dbReference type="HAMAP" id="MF_00182">
    <property type="entry name" value="Formyl_trans"/>
    <property type="match status" value="1"/>
</dbReference>
<dbReference type="InterPro" id="IPR005794">
    <property type="entry name" value="Fmt"/>
</dbReference>
<dbReference type="InterPro" id="IPR005793">
    <property type="entry name" value="Formyl_trans_C"/>
</dbReference>
<dbReference type="InterPro" id="IPR037022">
    <property type="entry name" value="Formyl_trans_C_sf"/>
</dbReference>
<dbReference type="InterPro" id="IPR002376">
    <property type="entry name" value="Formyl_transf_N"/>
</dbReference>
<dbReference type="InterPro" id="IPR036477">
    <property type="entry name" value="Formyl_transf_N_sf"/>
</dbReference>
<dbReference type="InterPro" id="IPR011034">
    <property type="entry name" value="Formyl_transferase-like_C_sf"/>
</dbReference>
<dbReference type="InterPro" id="IPR001555">
    <property type="entry name" value="GART_AS"/>
</dbReference>
<dbReference type="InterPro" id="IPR044135">
    <property type="entry name" value="Met-tRNA-FMT_C"/>
</dbReference>
<dbReference type="InterPro" id="IPR041711">
    <property type="entry name" value="Met-tRNA-FMT_N"/>
</dbReference>
<dbReference type="NCBIfam" id="TIGR00460">
    <property type="entry name" value="fmt"/>
    <property type="match status" value="1"/>
</dbReference>
<dbReference type="PANTHER" id="PTHR11138">
    <property type="entry name" value="METHIONYL-TRNA FORMYLTRANSFERASE"/>
    <property type="match status" value="1"/>
</dbReference>
<dbReference type="PANTHER" id="PTHR11138:SF5">
    <property type="entry name" value="METHIONYL-TRNA FORMYLTRANSFERASE, MITOCHONDRIAL"/>
    <property type="match status" value="1"/>
</dbReference>
<dbReference type="Pfam" id="PF02911">
    <property type="entry name" value="Formyl_trans_C"/>
    <property type="match status" value="1"/>
</dbReference>
<dbReference type="Pfam" id="PF00551">
    <property type="entry name" value="Formyl_trans_N"/>
    <property type="match status" value="1"/>
</dbReference>
<dbReference type="SUPFAM" id="SSF50486">
    <property type="entry name" value="FMT C-terminal domain-like"/>
    <property type="match status" value="1"/>
</dbReference>
<dbReference type="SUPFAM" id="SSF53328">
    <property type="entry name" value="Formyltransferase"/>
    <property type="match status" value="1"/>
</dbReference>
<dbReference type="PROSITE" id="PS00373">
    <property type="entry name" value="GART"/>
    <property type="match status" value="1"/>
</dbReference>
<evidence type="ECO:0000255" key="1">
    <source>
        <dbReference type="HAMAP-Rule" id="MF_00182"/>
    </source>
</evidence>
<gene>
    <name evidence="1" type="primary">fmt</name>
    <name type="ordered locus">spyM18_1638</name>
</gene>
<keyword id="KW-0648">Protein biosynthesis</keyword>
<keyword id="KW-0808">Transferase</keyword>